<dbReference type="EC" id="2.7.7.3" evidence="1"/>
<dbReference type="EMBL" id="FM200053">
    <property type="protein sequence ID" value="CAR61606.1"/>
    <property type="molecule type" value="Genomic_DNA"/>
</dbReference>
<dbReference type="RefSeq" id="WP_001171888.1">
    <property type="nucleotide sequence ID" value="NC_011147.1"/>
</dbReference>
<dbReference type="SMR" id="B5BI08"/>
<dbReference type="KEGG" id="sek:SSPA3340"/>
<dbReference type="HOGENOM" id="CLU_100149_0_1_6"/>
<dbReference type="UniPathway" id="UPA00241">
    <property type="reaction ID" value="UER00355"/>
</dbReference>
<dbReference type="Proteomes" id="UP000001869">
    <property type="component" value="Chromosome"/>
</dbReference>
<dbReference type="GO" id="GO:0005737">
    <property type="term" value="C:cytoplasm"/>
    <property type="evidence" value="ECO:0007669"/>
    <property type="project" value="UniProtKB-SubCell"/>
</dbReference>
<dbReference type="GO" id="GO:0005524">
    <property type="term" value="F:ATP binding"/>
    <property type="evidence" value="ECO:0007669"/>
    <property type="project" value="UniProtKB-KW"/>
</dbReference>
<dbReference type="GO" id="GO:0004595">
    <property type="term" value="F:pantetheine-phosphate adenylyltransferase activity"/>
    <property type="evidence" value="ECO:0007669"/>
    <property type="project" value="UniProtKB-UniRule"/>
</dbReference>
<dbReference type="GO" id="GO:0015937">
    <property type="term" value="P:coenzyme A biosynthetic process"/>
    <property type="evidence" value="ECO:0007669"/>
    <property type="project" value="UniProtKB-UniRule"/>
</dbReference>
<dbReference type="CDD" id="cd02163">
    <property type="entry name" value="PPAT"/>
    <property type="match status" value="1"/>
</dbReference>
<dbReference type="FunFam" id="3.40.50.620:FF:000012">
    <property type="entry name" value="Phosphopantetheine adenylyltransferase"/>
    <property type="match status" value="1"/>
</dbReference>
<dbReference type="Gene3D" id="3.40.50.620">
    <property type="entry name" value="HUPs"/>
    <property type="match status" value="1"/>
</dbReference>
<dbReference type="HAMAP" id="MF_00151">
    <property type="entry name" value="PPAT_bact"/>
    <property type="match status" value="1"/>
</dbReference>
<dbReference type="InterPro" id="IPR004821">
    <property type="entry name" value="Cyt_trans-like"/>
</dbReference>
<dbReference type="InterPro" id="IPR001980">
    <property type="entry name" value="PPAT"/>
</dbReference>
<dbReference type="InterPro" id="IPR014729">
    <property type="entry name" value="Rossmann-like_a/b/a_fold"/>
</dbReference>
<dbReference type="NCBIfam" id="TIGR01510">
    <property type="entry name" value="coaD_prev_kdtB"/>
    <property type="match status" value="1"/>
</dbReference>
<dbReference type="NCBIfam" id="TIGR00125">
    <property type="entry name" value="cyt_tran_rel"/>
    <property type="match status" value="1"/>
</dbReference>
<dbReference type="PANTHER" id="PTHR21342">
    <property type="entry name" value="PHOSPHOPANTETHEINE ADENYLYLTRANSFERASE"/>
    <property type="match status" value="1"/>
</dbReference>
<dbReference type="PANTHER" id="PTHR21342:SF1">
    <property type="entry name" value="PHOSPHOPANTETHEINE ADENYLYLTRANSFERASE"/>
    <property type="match status" value="1"/>
</dbReference>
<dbReference type="Pfam" id="PF01467">
    <property type="entry name" value="CTP_transf_like"/>
    <property type="match status" value="1"/>
</dbReference>
<dbReference type="PRINTS" id="PR01020">
    <property type="entry name" value="LPSBIOSNTHSS"/>
</dbReference>
<dbReference type="SUPFAM" id="SSF52374">
    <property type="entry name" value="Nucleotidylyl transferase"/>
    <property type="match status" value="1"/>
</dbReference>
<organism>
    <name type="scientific">Salmonella paratyphi A (strain AKU_12601)</name>
    <dbReference type="NCBI Taxonomy" id="554290"/>
    <lineage>
        <taxon>Bacteria</taxon>
        <taxon>Pseudomonadati</taxon>
        <taxon>Pseudomonadota</taxon>
        <taxon>Gammaproteobacteria</taxon>
        <taxon>Enterobacterales</taxon>
        <taxon>Enterobacteriaceae</taxon>
        <taxon>Salmonella</taxon>
    </lineage>
</organism>
<accession>B5BI08</accession>
<reference key="1">
    <citation type="journal article" date="2009" name="BMC Genomics">
        <title>Pseudogene accumulation in the evolutionary histories of Salmonella enterica serovars Paratyphi A and Typhi.</title>
        <authorList>
            <person name="Holt K.E."/>
            <person name="Thomson N.R."/>
            <person name="Wain J."/>
            <person name="Langridge G.C."/>
            <person name="Hasan R."/>
            <person name="Bhutta Z.A."/>
            <person name="Quail M.A."/>
            <person name="Norbertczak H."/>
            <person name="Walker D."/>
            <person name="Simmonds M."/>
            <person name="White B."/>
            <person name="Bason N."/>
            <person name="Mungall K."/>
            <person name="Dougan G."/>
            <person name="Parkhill J."/>
        </authorList>
    </citation>
    <scope>NUCLEOTIDE SEQUENCE [LARGE SCALE GENOMIC DNA]</scope>
    <source>
        <strain>AKU_12601</strain>
    </source>
</reference>
<evidence type="ECO:0000255" key="1">
    <source>
        <dbReference type="HAMAP-Rule" id="MF_00151"/>
    </source>
</evidence>
<sequence length="159" mass="17925">MQKRAIYPGTFDPITNGHLDIVTRATQMFDHVILAIAASPGKKPMFTLNERVALAQKATAHLGNVEVVGFSDLMANFARDRQANILIRGLRAVADFEYEMQLAHMNRHLMPQLESVFLMPSKEWSFISSSLVKEVARHQGDVTHFLPDNVHQALMDKLK</sequence>
<name>COAD_SALPK</name>
<protein>
    <recommendedName>
        <fullName evidence="1">Phosphopantetheine adenylyltransferase</fullName>
        <ecNumber evidence="1">2.7.7.3</ecNumber>
    </recommendedName>
    <alternativeName>
        <fullName evidence="1">Dephospho-CoA pyrophosphorylase</fullName>
    </alternativeName>
    <alternativeName>
        <fullName evidence="1">Pantetheine-phosphate adenylyltransferase</fullName>
        <shortName evidence="1">PPAT</shortName>
    </alternativeName>
</protein>
<keyword id="KW-0067">ATP-binding</keyword>
<keyword id="KW-0173">Coenzyme A biosynthesis</keyword>
<keyword id="KW-0963">Cytoplasm</keyword>
<keyword id="KW-0460">Magnesium</keyword>
<keyword id="KW-0547">Nucleotide-binding</keyword>
<keyword id="KW-0548">Nucleotidyltransferase</keyword>
<keyword id="KW-0808">Transferase</keyword>
<comment type="function">
    <text evidence="1">Reversibly transfers an adenylyl group from ATP to 4'-phosphopantetheine, yielding dephospho-CoA (dPCoA) and pyrophosphate.</text>
</comment>
<comment type="catalytic activity">
    <reaction evidence="1">
        <text>(R)-4'-phosphopantetheine + ATP + H(+) = 3'-dephospho-CoA + diphosphate</text>
        <dbReference type="Rhea" id="RHEA:19801"/>
        <dbReference type="ChEBI" id="CHEBI:15378"/>
        <dbReference type="ChEBI" id="CHEBI:30616"/>
        <dbReference type="ChEBI" id="CHEBI:33019"/>
        <dbReference type="ChEBI" id="CHEBI:57328"/>
        <dbReference type="ChEBI" id="CHEBI:61723"/>
        <dbReference type="EC" id="2.7.7.3"/>
    </reaction>
</comment>
<comment type="cofactor">
    <cofactor evidence="1">
        <name>Mg(2+)</name>
        <dbReference type="ChEBI" id="CHEBI:18420"/>
    </cofactor>
</comment>
<comment type="pathway">
    <text evidence="1">Cofactor biosynthesis; coenzyme A biosynthesis; CoA from (R)-pantothenate: step 4/5.</text>
</comment>
<comment type="subunit">
    <text evidence="1">Homohexamer.</text>
</comment>
<comment type="subcellular location">
    <subcellularLocation>
        <location evidence="1">Cytoplasm</location>
    </subcellularLocation>
</comment>
<comment type="similarity">
    <text evidence="1">Belongs to the bacterial CoaD family.</text>
</comment>
<gene>
    <name evidence="1" type="primary">coaD</name>
    <name type="ordered locus">SSPA3340</name>
</gene>
<proteinExistence type="inferred from homology"/>
<feature type="chain" id="PRO_1000096838" description="Phosphopantetheine adenylyltransferase">
    <location>
        <begin position="1"/>
        <end position="159"/>
    </location>
</feature>
<feature type="binding site" evidence="1">
    <location>
        <begin position="10"/>
        <end position="11"/>
    </location>
    <ligand>
        <name>ATP</name>
        <dbReference type="ChEBI" id="CHEBI:30616"/>
    </ligand>
</feature>
<feature type="binding site" evidence="1">
    <location>
        <position position="10"/>
    </location>
    <ligand>
        <name>substrate</name>
    </ligand>
</feature>
<feature type="binding site" evidence="1">
    <location>
        <position position="18"/>
    </location>
    <ligand>
        <name>ATP</name>
        <dbReference type="ChEBI" id="CHEBI:30616"/>
    </ligand>
</feature>
<feature type="binding site" evidence="1">
    <location>
        <position position="42"/>
    </location>
    <ligand>
        <name>substrate</name>
    </ligand>
</feature>
<feature type="binding site" evidence="1">
    <location>
        <position position="74"/>
    </location>
    <ligand>
        <name>substrate</name>
    </ligand>
</feature>
<feature type="binding site" evidence="1">
    <location>
        <position position="88"/>
    </location>
    <ligand>
        <name>substrate</name>
    </ligand>
</feature>
<feature type="binding site" evidence="1">
    <location>
        <begin position="89"/>
        <end position="91"/>
    </location>
    <ligand>
        <name>ATP</name>
        <dbReference type="ChEBI" id="CHEBI:30616"/>
    </ligand>
</feature>
<feature type="binding site" evidence="1">
    <location>
        <position position="99"/>
    </location>
    <ligand>
        <name>ATP</name>
        <dbReference type="ChEBI" id="CHEBI:30616"/>
    </ligand>
</feature>
<feature type="binding site" evidence="1">
    <location>
        <begin position="124"/>
        <end position="130"/>
    </location>
    <ligand>
        <name>ATP</name>
        <dbReference type="ChEBI" id="CHEBI:30616"/>
    </ligand>
</feature>
<feature type="site" description="Transition state stabilizer" evidence="1">
    <location>
        <position position="18"/>
    </location>
</feature>